<gene>
    <name evidence="1" type="primary">trpC</name>
    <name type="ordered locus">LSEI_0077</name>
</gene>
<name>TRPC_LACP3</name>
<organism>
    <name type="scientific">Lacticaseibacillus paracasei (strain ATCC 334 / BCRC 17002 / CCUG 31169 / CIP 107868 / KCTC 3260 / NRRL B-441)</name>
    <name type="common">Lactobacillus paracasei</name>
    <dbReference type="NCBI Taxonomy" id="321967"/>
    <lineage>
        <taxon>Bacteria</taxon>
        <taxon>Bacillati</taxon>
        <taxon>Bacillota</taxon>
        <taxon>Bacilli</taxon>
        <taxon>Lactobacillales</taxon>
        <taxon>Lactobacillaceae</taxon>
        <taxon>Lacticaseibacillus</taxon>
    </lineage>
</organism>
<reference key="1">
    <citation type="journal article" date="2006" name="Proc. Natl. Acad. Sci. U.S.A.">
        <title>Comparative genomics of the lactic acid bacteria.</title>
        <authorList>
            <person name="Makarova K.S."/>
            <person name="Slesarev A."/>
            <person name="Wolf Y.I."/>
            <person name="Sorokin A."/>
            <person name="Mirkin B."/>
            <person name="Koonin E.V."/>
            <person name="Pavlov A."/>
            <person name="Pavlova N."/>
            <person name="Karamychev V."/>
            <person name="Polouchine N."/>
            <person name="Shakhova V."/>
            <person name="Grigoriev I."/>
            <person name="Lou Y."/>
            <person name="Rohksar D."/>
            <person name="Lucas S."/>
            <person name="Huang K."/>
            <person name="Goodstein D.M."/>
            <person name="Hawkins T."/>
            <person name="Plengvidhya V."/>
            <person name="Welker D."/>
            <person name="Hughes J."/>
            <person name="Goh Y."/>
            <person name="Benson A."/>
            <person name="Baldwin K."/>
            <person name="Lee J.-H."/>
            <person name="Diaz-Muniz I."/>
            <person name="Dosti B."/>
            <person name="Smeianov V."/>
            <person name="Wechter W."/>
            <person name="Barabote R."/>
            <person name="Lorca G."/>
            <person name="Altermann E."/>
            <person name="Barrangou R."/>
            <person name="Ganesan B."/>
            <person name="Xie Y."/>
            <person name="Rawsthorne H."/>
            <person name="Tamir D."/>
            <person name="Parker C."/>
            <person name="Breidt F."/>
            <person name="Broadbent J.R."/>
            <person name="Hutkins R."/>
            <person name="O'Sullivan D."/>
            <person name="Steele J."/>
            <person name="Unlu G."/>
            <person name="Saier M.H. Jr."/>
            <person name="Klaenhammer T."/>
            <person name="Richardson P."/>
            <person name="Kozyavkin S."/>
            <person name="Weimer B.C."/>
            <person name="Mills D.A."/>
        </authorList>
    </citation>
    <scope>NUCLEOTIDE SEQUENCE [LARGE SCALE GENOMIC DNA]</scope>
    <source>
        <strain>ATCC 334 / BCRC 17002 / CCUG 31169 / CIP 107868 / KCTC 3260 / NRRL B-441</strain>
    </source>
</reference>
<proteinExistence type="inferred from homology"/>
<dbReference type="EC" id="4.1.1.48" evidence="1"/>
<dbReference type="EMBL" id="CP000423">
    <property type="protein sequence ID" value="ABJ68941.1"/>
    <property type="molecule type" value="Genomic_DNA"/>
</dbReference>
<dbReference type="RefSeq" id="WP_003592589.1">
    <property type="nucleotide sequence ID" value="NC_008526.1"/>
</dbReference>
<dbReference type="RefSeq" id="YP_805383.1">
    <property type="nucleotide sequence ID" value="NC_008526.1"/>
</dbReference>
<dbReference type="SMR" id="Q03CY1"/>
<dbReference type="STRING" id="321967.LSEI_0077"/>
<dbReference type="PaxDb" id="321967-LSEI_0077"/>
<dbReference type="KEGG" id="lca:LSEI_0077"/>
<dbReference type="PATRIC" id="fig|321967.11.peg.102"/>
<dbReference type="HOGENOM" id="CLU_034247_2_0_9"/>
<dbReference type="UniPathway" id="UPA00035">
    <property type="reaction ID" value="UER00043"/>
</dbReference>
<dbReference type="Proteomes" id="UP000001651">
    <property type="component" value="Chromosome"/>
</dbReference>
<dbReference type="GO" id="GO:0004425">
    <property type="term" value="F:indole-3-glycerol-phosphate synthase activity"/>
    <property type="evidence" value="ECO:0007669"/>
    <property type="project" value="UniProtKB-UniRule"/>
</dbReference>
<dbReference type="GO" id="GO:0004640">
    <property type="term" value="F:phosphoribosylanthranilate isomerase activity"/>
    <property type="evidence" value="ECO:0007669"/>
    <property type="project" value="TreeGrafter"/>
</dbReference>
<dbReference type="GO" id="GO:0000162">
    <property type="term" value="P:L-tryptophan biosynthetic process"/>
    <property type="evidence" value="ECO:0007669"/>
    <property type="project" value="UniProtKB-UniRule"/>
</dbReference>
<dbReference type="CDD" id="cd00331">
    <property type="entry name" value="IGPS"/>
    <property type="match status" value="1"/>
</dbReference>
<dbReference type="FunFam" id="3.20.20.70:FF:000024">
    <property type="entry name" value="Indole-3-glycerol phosphate synthase"/>
    <property type="match status" value="1"/>
</dbReference>
<dbReference type="Gene3D" id="3.20.20.70">
    <property type="entry name" value="Aldolase class I"/>
    <property type="match status" value="1"/>
</dbReference>
<dbReference type="HAMAP" id="MF_00134_B">
    <property type="entry name" value="IGPS_B"/>
    <property type="match status" value="1"/>
</dbReference>
<dbReference type="InterPro" id="IPR013785">
    <property type="entry name" value="Aldolase_TIM"/>
</dbReference>
<dbReference type="InterPro" id="IPR045186">
    <property type="entry name" value="Indole-3-glycerol_P_synth"/>
</dbReference>
<dbReference type="InterPro" id="IPR013798">
    <property type="entry name" value="Indole-3-glycerol_P_synth_dom"/>
</dbReference>
<dbReference type="InterPro" id="IPR001468">
    <property type="entry name" value="Indole-3-GlycerolPSynthase_CS"/>
</dbReference>
<dbReference type="InterPro" id="IPR011060">
    <property type="entry name" value="RibuloseP-bd_barrel"/>
</dbReference>
<dbReference type="NCBIfam" id="NF001377">
    <property type="entry name" value="PRK00278.2-4"/>
    <property type="match status" value="1"/>
</dbReference>
<dbReference type="PANTHER" id="PTHR22854:SF2">
    <property type="entry name" value="INDOLE-3-GLYCEROL-PHOSPHATE SYNTHASE"/>
    <property type="match status" value="1"/>
</dbReference>
<dbReference type="PANTHER" id="PTHR22854">
    <property type="entry name" value="TRYPTOPHAN BIOSYNTHESIS PROTEIN"/>
    <property type="match status" value="1"/>
</dbReference>
<dbReference type="Pfam" id="PF00218">
    <property type="entry name" value="IGPS"/>
    <property type="match status" value="1"/>
</dbReference>
<dbReference type="SUPFAM" id="SSF51366">
    <property type="entry name" value="Ribulose-phoshate binding barrel"/>
    <property type="match status" value="1"/>
</dbReference>
<dbReference type="PROSITE" id="PS00614">
    <property type="entry name" value="IGPS"/>
    <property type="match status" value="1"/>
</dbReference>
<feature type="chain" id="PRO_1000018487" description="Indole-3-glycerol phosphate synthase">
    <location>
        <begin position="1"/>
        <end position="260"/>
    </location>
</feature>
<sequence>MILDDLVAVTKIRLARHQRQQSLADLKQTVAKMPRNHKPDFLTRLKQPGLHVIAEVKKASPSKGTIVTDFPYLAIAKAYDQAGADAISVLTEPDYFNGHLHYLKEISQQVSVPTLRKDFTIDPYMIYEAKANGAVIILLIVAILTDQQLRDYRQLAEKLGMHAIVEAYTAAEVTRALQSGAKIIGINNRNLKDFRVDFNNSLKLRAMVPDNIPVVAESGIKTQEDVEKLAAAGFNAILIGETLMRSNQKRQLIAAFKERA</sequence>
<comment type="catalytic activity">
    <reaction evidence="1">
        <text>1-(2-carboxyphenylamino)-1-deoxy-D-ribulose 5-phosphate + H(+) = (1S,2R)-1-C-(indol-3-yl)glycerol 3-phosphate + CO2 + H2O</text>
        <dbReference type="Rhea" id="RHEA:23476"/>
        <dbReference type="ChEBI" id="CHEBI:15377"/>
        <dbReference type="ChEBI" id="CHEBI:15378"/>
        <dbReference type="ChEBI" id="CHEBI:16526"/>
        <dbReference type="ChEBI" id="CHEBI:58613"/>
        <dbReference type="ChEBI" id="CHEBI:58866"/>
        <dbReference type="EC" id="4.1.1.48"/>
    </reaction>
</comment>
<comment type="pathway">
    <text evidence="1">Amino-acid biosynthesis; L-tryptophan biosynthesis; L-tryptophan from chorismate: step 4/5.</text>
</comment>
<comment type="similarity">
    <text evidence="1">Belongs to the TrpC family.</text>
</comment>
<accession>Q03CY1</accession>
<keyword id="KW-0028">Amino-acid biosynthesis</keyword>
<keyword id="KW-0057">Aromatic amino acid biosynthesis</keyword>
<keyword id="KW-0210">Decarboxylase</keyword>
<keyword id="KW-0456">Lyase</keyword>
<keyword id="KW-1185">Reference proteome</keyword>
<keyword id="KW-0822">Tryptophan biosynthesis</keyword>
<protein>
    <recommendedName>
        <fullName evidence="1">Indole-3-glycerol phosphate synthase</fullName>
        <shortName evidence="1">IGPS</shortName>
        <ecNumber evidence="1">4.1.1.48</ecNumber>
    </recommendedName>
</protein>
<evidence type="ECO:0000255" key="1">
    <source>
        <dbReference type="HAMAP-Rule" id="MF_00134"/>
    </source>
</evidence>